<gene>
    <name evidence="1" type="primary">hisA</name>
    <name type="ordered locus">ECP_2067</name>
</gene>
<feature type="chain" id="PRO_0000290474" description="1-(5-phosphoribosyl)-5-[(5-phosphoribosylamino)methylideneamino] imidazole-4-carboxamide isomerase">
    <location>
        <begin position="1"/>
        <end position="245"/>
    </location>
</feature>
<feature type="active site" description="Proton acceptor" evidence="1">
    <location>
        <position position="7"/>
    </location>
</feature>
<feature type="active site" description="Proton donor" evidence="1">
    <location>
        <position position="129"/>
    </location>
</feature>
<dbReference type="EC" id="5.3.1.16" evidence="1"/>
<dbReference type="EMBL" id="CP000247">
    <property type="protein sequence ID" value="ABG70066.1"/>
    <property type="molecule type" value="Genomic_DNA"/>
</dbReference>
<dbReference type="RefSeq" id="WP_000586497.1">
    <property type="nucleotide sequence ID" value="NC_008253.1"/>
</dbReference>
<dbReference type="SMR" id="Q0TG63"/>
<dbReference type="KEGG" id="ecp:ECP_2067"/>
<dbReference type="HOGENOM" id="CLU_048577_1_2_6"/>
<dbReference type="UniPathway" id="UPA00031">
    <property type="reaction ID" value="UER00009"/>
</dbReference>
<dbReference type="Proteomes" id="UP000009182">
    <property type="component" value="Chromosome"/>
</dbReference>
<dbReference type="GO" id="GO:0005737">
    <property type="term" value="C:cytoplasm"/>
    <property type="evidence" value="ECO:0007669"/>
    <property type="project" value="UniProtKB-SubCell"/>
</dbReference>
<dbReference type="GO" id="GO:0003949">
    <property type="term" value="F:1-(5-phosphoribosyl)-5-[(5-phosphoribosylamino)methylideneamino]imidazole-4-carboxamide isomerase activity"/>
    <property type="evidence" value="ECO:0007669"/>
    <property type="project" value="UniProtKB-UniRule"/>
</dbReference>
<dbReference type="GO" id="GO:0000105">
    <property type="term" value="P:L-histidine biosynthetic process"/>
    <property type="evidence" value="ECO:0007669"/>
    <property type="project" value="UniProtKB-UniRule"/>
</dbReference>
<dbReference type="GO" id="GO:0000162">
    <property type="term" value="P:L-tryptophan biosynthetic process"/>
    <property type="evidence" value="ECO:0007669"/>
    <property type="project" value="TreeGrafter"/>
</dbReference>
<dbReference type="CDD" id="cd04732">
    <property type="entry name" value="HisA"/>
    <property type="match status" value="1"/>
</dbReference>
<dbReference type="FunFam" id="3.20.20.70:FF:000009">
    <property type="entry name" value="1-(5-phosphoribosyl)-5-[(5-phosphoribosylamino)methylideneamino] imidazole-4-carboxamide isomerase"/>
    <property type="match status" value="1"/>
</dbReference>
<dbReference type="Gene3D" id="3.20.20.70">
    <property type="entry name" value="Aldolase class I"/>
    <property type="match status" value="1"/>
</dbReference>
<dbReference type="HAMAP" id="MF_01014">
    <property type="entry name" value="HisA"/>
    <property type="match status" value="1"/>
</dbReference>
<dbReference type="InterPro" id="IPR013785">
    <property type="entry name" value="Aldolase_TIM"/>
</dbReference>
<dbReference type="InterPro" id="IPR006062">
    <property type="entry name" value="His_biosynth"/>
</dbReference>
<dbReference type="InterPro" id="IPR006063">
    <property type="entry name" value="HisA_bact_arch"/>
</dbReference>
<dbReference type="InterPro" id="IPR044524">
    <property type="entry name" value="Isoase_HisA-like"/>
</dbReference>
<dbReference type="InterPro" id="IPR023016">
    <property type="entry name" value="Isoase_HisA-like_bact"/>
</dbReference>
<dbReference type="InterPro" id="IPR011060">
    <property type="entry name" value="RibuloseP-bd_barrel"/>
</dbReference>
<dbReference type="NCBIfam" id="TIGR00007">
    <property type="entry name" value="1-(5-phosphoribosyl)-5-[(5-phosphoribosylamino)methylideneamino]imidazole-4-carboxamide isomerase"/>
    <property type="match status" value="1"/>
</dbReference>
<dbReference type="PANTHER" id="PTHR43090">
    <property type="entry name" value="1-(5-PHOSPHORIBOSYL)-5-[(5-PHOSPHORIBOSYLAMINO)METHYLIDENEAMINO] IMIDAZOLE-4-CARBOXAMIDE ISOMERASE"/>
    <property type="match status" value="1"/>
</dbReference>
<dbReference type="PANTHER" id="PTHR43090:SF2">
    <property type="entry name" value="1-(5-PHOSPHORIBOSYL)-5-[(5-PHOSPHORIBOSYLAMINO)METHYLIDENEAMINO] IMIDAZOLE-4-CARBOXAMIDE ISOMERASE"/>
    <property type="match status" value="1"/>
</dbReference>
<dbReference type="Pfam" id="PF00977">
    <property type="entry name" value="His_biosynth"/>
    <property type="match status" value="1"/>
</dbReference>
<dbReference type="SUPFAM" id="SSF51366">
    <property type="entry name" value="Ribulose-phoshate binding barrel"/>
    <property type="match status" value="1"/>
</dbReference>
<keyword id="KW-0028">Amino-acid biosynthesis</keyword>
<keyword id="KW-0963">Cytoplasm</keyword>
<keyword id="KW-0368">Histidine biosynthesis</keyword>
<keyword id="KW-0413">Isomerase</keyword>
<protein>
    <recommendedName>
        <fullName evidence="1">1-(5-phosphoribosyl)-5-[(5-phosphoribosylamino)methylideneamino] imidazole-4-carboxamide isomerase</fullName>
        <ecNumber evidence="1">5.3.1.16</ecNumber>
    </recommendedName>
    <alternativeName>
        <fullName evidence="1">Phosphoribosylformimino-5-aminoimidazole carboxamide ribotide isomerase</fullName>
    </alternativeName>
</protein>
<evidence type="ECO:0000255" key="1">
    <source>
        <dbReference type="HAMAP-Rule" id="MF_01014"/>
    </source>
</evidence>
<comment type="catalytic activity">
    <reaction evidence="1">
        <text>1-(5-phospho-beta-D-ribosyl)-5-[(5-phospho-beta-D-ribosylamino)methylideneamino]imidazole-4-carboxamide = 5-[(5-phospho-1-deoxy-D-ribulos-1-ylimino)methylamino]-1-(5-phospho-beta-D-ribosyl)imidazole-4-carboxamide</text>
        <dbReference type="Rhea" id="RHEA:15469"/>
        <dbReference type="ChEBI" id="CHEBI:58435"/>
        <dbReference type="ChEBI" id="CHEBI:58525"/>
        <dbReference type="EC" id="5.3.1.16"/>
    </reaction>
</comment>
<comment type="pathway">
    <text evidence="1">Amino-acid biosynthesis; L-histidine biosynthesis; L-histidine from 5-phospho-alpha-D-ribose 1-diphosphate: step 4/9.</text>
</comment>
<comment type="subcellular location">
    <subcellularLocation>
        <location evidence="1">Cytoplasm</location>
    </subcellularLocation>
</comment>
<comment type="similarity">
    <text evidence="1">Belongs to the HisA/HisF family.</text>
</comment>
<proteinExistence type="inferred from homology"/>
<organism>
    <name type="scientific">Escherichia coli O6:K15:H31 (strain 536 / UPEC)</name>
    <dbReference type="NCBI Taxonomy" id="362663"/>
    <lineage>
        <taxon>Bacteria</taxon>
        <taxon>Pseudomonadati</taxon>
        <taxon>Pseudomonadota</taxon>
        <taxon>Gammaproteobacteria</taxon>
        <taxon>Enterobacterales</taxon>
        <taxon>Enterobacteriaceae</taxon>
        <taxon>Escherichia</taxon>
    </lineage>
</organism>
<sequence>MIIPALDLIDGTVVRLHQGDYGKQRDYGNNPLPRLQDYAAQGAEVLHLVDLTGAKDPAKRQIPLIKTLVAGVNVPVQVGGGVRSEKDVAALLEAGVARVVVGSTAVKSPEMVKGWFERFGADALVLALDVRIDEQGNKQVAVSGWQENSGVSLEQLVETYLPVGLKHVLCTDISRDGTLAGSNVSLYEEVCARYPQVAFQSSGGIGDINDVAALRGTGVRGVIVGRALLEGKFTVKEAIACWQNA</sequence>
<name>HIS4_ECOL5</name>
<accession>Q0TG63</accession>
<reference key="1">
    <citation type="journal article" date="2006" name="Mol. Microbiol.">
        <title>Role of pathogenicity island-associated integrases in the genome plasticity of uropathogenic Escherichia coli strain 536.</title>
        <authorList>
            <person name="Hochhut B."/>
            <person name="Wilde C."/>
            <person name="Balling G."/>
            <person name="Middendorf B."/>
            <person name="Dobrindt U."/>
            <person name="Brzuszkiewicz E."/>
            <person name="Gottschalk G."/>
            <person name="Carniel E."/>
            <person name="Hacker J."/>
        </authorList>
    </citation>
    <scope>NUCLEOTIDE SEQUENCE [LARGE SCALE GENOMIC DNA]</scope>
    <source>
        <strain>536 / UPEC</strain>
    </source>
</reference>